<evidence type="ECO:0000250" key="1">
    <source>
        <dbReference type="UniProtKB" id="Q9LZF1"/>
    </source>
</evidence>
<evidence type="ECO:0000250" key="2">
    <source>
        <dbReference type="UniProtKB" id="Q9SZN7"/>
    </source>
</evidence>
<evidence type="ECO:0000255" key="3">
    <source>
        <dbReference type="PROSITE-ProRule" id="PRU00280"/>
    </source>
</evidence>
<evidence type="ECO:0000256" key="4">
    <source>
        <dbReference type="SAM" id="MobiDB-lite"/>
    </source>
</evidence>
<evidence type="ECO:0000303" key="5">
    <source>
    </source>
</evidence>
<evidence type="ECO:0000303" key="6">
    <source>
    </source>
</evidence>
<evidence type="ECO:0000305" key="7"/>
<evidence type="ECO:0000305" key="8">
    <source>
    </source>
</evidence>
<evidence type="ECO:0000312" key="9">
    <source>
        <dbReference type="Araport" id="AT5G52740"/>
    </source>
</evidence>
<evidence type="ECO:0000312" key="10">
    <source>
        <dbReference type="EMBL" id="BAA98092.1"/>
    </source>
</evidence>
<accession>Q9LTE3</accession>
<feature type="chain" id="PRO_0000437813" description="Heavy metal-associated isoprenylated plant protein 12">
    <location>
        <begin position="1"/>
        <end position="115"/>
    </location>
</feature>
<feature type="propeptide" id="PRO_0000437814" description="Removed in mature form" evidence="7">
    <location>
        <begin position="116"/>
        <end position="118"/>
    </location>
</feature>
<feature type="domain" description="HMA" evidence="3">
    <location>
        <begin position="1"/>
        <end position="65"/>
    </location>
</feature>
<feature type="region of interest" description="Disordered" evidence="4">
    <location>
        <begin position="68"/>
        <end position="87"/>
    </location>
</feature>
<feature type="compositionally biased region" description="Basic and acidic residues" evidence="4">
    <location>
        <begin position="69"/>
        <end position="86"/>
    </location>
</feature>
<feature type="modified residue" description="Cysteine methyl ester" evidence="2">
    <location>
        <position position="115"/>
    </location>
</feature>
<feature type="lipid moiety-binding region" description="S-farnesyl cysteine" evidence="2">
    <location>
        <position position="115"/>
    </location>
</feature>
<reference key="1">
    <citation type="submission" date="1999-04" db="EMBL/GenBank/DDBJ databases">
        <title>Structural analysis of Arabidopsis thaliana chromosome 5. XI.</title>
        <authorList>
            <person name="Kaneko T."/>
            <person name="Katoh T."/>
            <person name="Asamizu E."/>
            <person name="Sato S."/>
            <person name="Nakamura Y."/>
            <person name="Kotani H."/>
            <person name="Tabata S."/>
        </authorList>
    </citation>
    <scope>NUCLEOTIDE SEQUENCE [LARGE SCALE GENOMIC DNA]</scope>
    <source>
        <strain>cv. Columbia</strain>
    </source>
</reference>
<reference key="2">
    <citation type="journal article" date="2017" name="Plant J.">
        <title>Araport11: a complete reannotation of the Arabidopsis thaliana reference genome.</title>
        <authorList>
            <person name="Cheng C.Y."/>
            <person name="Krishnakumar V."/>
            <person name="Chan A.P."/>
            <person name="Thibaud-Nissen F."/>
            <person name="Schobel S."/>
            <person name="Town C.D."/>
        </authorList>
    </citation>
    <scope>GENOME REANNOTATION</scope>
    <source>
        <strain>cv. Columbia</strain>
    </source>
</reference>
<reference key="3">
    <citation type="journal article" date="2010" name="Metallomics">
        <title>Metallochaperone-like genes in Arabidopsis thaliana.</title>
        <authorList>
            <person name="Tehseen M."/>
            <person name="Cairns N."/>
            <person name="Sherson S."/>
            <person name="Cobbett C.S."/>
        </authorList>
    </citation>
    <scope>GENE FAMILY</scope>
    <scope>NOMENCLATURE</scope>
</reference>
<reference key="4">
    <citation type="journal article" date="2013" name="FEBS J.">
        <title>Heavy metal-associated isoprenylated plant protein (HIPP): characterization of a family of proteins exclusive to plants.</title>
        <authorList>
            <person name="de Abreu-Neto J.B."/>
            <person name="Turchetto-Zolet A.C."/>
            <person name="de Oliveira L.F."/>
            <person name="Zanettini M.H."/>
            <person name="Margis-Pinheiro M."/>
        </authorList>
    </citation>
    <scope>GENE FAMILY</scope>
    <scope>NOMENCLATURE</scope>
</reference>
<proteinExistence type="inferred from homology"/>
<name>HIP12_ARATH</name>
<organism evidence="10">
    <name type="scientific">Arabidopsis thaliana</name>
    <name type="common">Mouse-ear cress</name>
    <dbReference type="NCBI Taxonomy" id="3702"/>
    <lineage>
        <taxon>Eukaryota</taxon>
        <taxon>Viridiplantae</taxon>
        <taxon>Streptophyta</taxon>
        <taxon>Embryophyta</taxon>
        <taxon>Tracheophyta</taxon>
        <taxon>Spermatophyta</taxon>
        <taxon>Magnoliopsida</taxon>
        <taxon>eudicotyledons</taxon>
        <taxon>Gunneridae</taxon>
        <taxon>Pentapetalae</taxon>
        <taxon>rosids</taxon>
        <taxon>malvids</taxon>
        <taxon>Brassicales</taxon>
        <taxon>Brassicaceae</taxon>
        <taxon>Camelineae</taxon>
        <taxon>Arabidopsis</taxon>
    </lineage>
</organism>
<protein>
    <recommendedName>
        <fullName evidence="5 6">Heavy metal-associated isoprenylated plant protein 12</fullName>
        <shortName evidence="5 6">AtHIP12</shortName>
    </recommendedName>
</protein>
<dbReference type="EMBL" id="AB025606">
    <property type="protein sequence ID" value="BAA98092.1"/>
    <property type="molecule type" value="Genomic_DNA"/>
</dbReference>
<dbReference type="EMBL" id="CP002688">
    <property type="protein sequence ID" value="AED96255.1"/>
    <property type="molecule type" value="Genomic_DNA"/>
</dbReference>
<dbReference type="RefSeq" id="NP_200086.1">
    <property type="nucleotide sequence ID" value="NM_124652.2"/>
</dbReference>
<dbReference type="SMR" id="Q9LTE3"/>
<dbReference type="STRING" id="3702.Q9LTE3"/>
<dbReference type="PaxDb" id="3702-AT5G52740.1"/>
<dbReference type="EnsemblPlants" id="AT5G52740.1">
    <property type="protein sequence ID" value="AT5G52740.1"/>
    <property type="gene ID" value="AT5G52740"/>
</dbReference>
<dbReference type="GeneID" id="835351"/>
<dbReference type="Gramene" id="AT5G52740.1">
    <property type="protein sequence ID" value="AT5G52740.1"/>
    <property type="gene ID" value="AT5G52740"/>
</dbReference>
<dbReference type="KEGG" id="ath:AT5G52740"/>
<dbReference type="Araport" id="AT5G52740"/>
<dbReference type="TAIR" id="AT5G52740"/>
<dbReference type="eggNOG" id="ENOG502R1NF">
    <property type="taxonomic scope" value="Eukaryota"/>
</dbReference>
<dbReference type="HOGENOM" id="CLU_092610_3_1_1"/>
<dbReference type="InParanoid" id="Q9LTE3"/>
<dbReference type="OMA" id="HPYYHGH"/>
<dbReference type="PhylomeDB" id="Q9LTE3"/>
<dbReference type="PRO" id="PR:Q9LTE3"/>
<dbReference type="Proteomes" id="UP000006548">
    <property type="component" value="Chromosome 5"/>
</dbReference>
<dbReference type="ExpressionAtlas" id="Q9LTE3">
    <property type="expression patterns" value="baseline and differential"/>
</dbReference>
<dbReference type="GO" id="GO:0046872">
    <property type="term" value="F:metal ion binding"/>
    <property type="evidence" value="ECO:0007669"/>
    <property type="project" value="UniProtKB-KW"/>
</dbReference>
<dbReference type="Gene3D" id="3.30.70.100">
    <property type="match status" value="1"/>
</dbReference>
<dbReference type="InterPro" id="IPR051863">
    <property type="entry name" value="HIPP"/>
</dbReference>
<dbReference type="InterPro" id="IPR006121">
    <property type="entry name" value="HMA_dom"/>
</dbReference>
<dbReference type="PANTHER" id="PTHR45811">
    <property type="entry name" value="COPPER TRANSPORT PROTEIN FAMILY-RELATED"/>
    <property type="match status" value="1"/>
</dbReference>
<dbReference type="PANTHER" id="PTHR45811:SF50">
    <property type="entry name" value="HEAVY METAL-ASSOCIATED ISOPRENYLATED PLANT PROTEIN 12-RELATED"/>
    <property type="match status" value="1"/>
</dbReference>
<dbReference type="PROSITE" id="PS50846">
    <property type="entry name" value="HMA_2"/>
    <property type="match status" value="1"/>
</dbReference>
<keyword id="KW-0449">Lipoprotein</keyword>
<keyword id="KW-0479">Metal-binding</keyword>
<keyword id="KW-0488">Methylation</keyword>
<keyword id="KW-0636">Prenylation</keyword>
<keyword id="KW-1185">Reference proteome</keyword>
<sequence length="118" mass="13225">MQVVVLKLDVHCEKTKQKAMSTVCCLSGVNSVEVKDGKLTVTGEIDAYMIVKKLKKICHTEFISVGPVKEPEKKKPDDPKKPETKPPDVIYHYVPPCPPYYHNFNGCYNEDPNACVTS</sequence>
<gene>
    <name evidence="5 6" type="primary">HIPP12</name>
    <name evidence="9" type="ordered locus">At5g52740</name>
    <name evidence="10" type="ORF">F6N7.23</name>
</gene>
<comment type="function">
    <text evidence="1">Probable heavy-metal-binding protein.</text>
</comment>
<comment type="similarity">
    <text evidence="7">Belongs to the HIPP family.</text>
</comment>
<comment type="caution">
    <text evidence="8">Contains an apparent HMA-like domain but lacks the core conserved Cys-X-X-Cys motif.</text>
</comment>